<dbReference type="EC" id="5.1.1.3" evidence="1"/>
<dbReference type="EMBL" id="CP000891">
    <property type="protein sequence ID" value="ABX47363.1"/>
    <property type="molecule type" value="Genomic_DNA"/>
</dbReference>
<dbReference type="RefSeq" id="WP_006087520.1">
    <property type="nucleotide sequence ID" value="NC_009997.1"/>
</dbReference>
<dbReference type="SMR" id="A9KW83"/>
<dbReference type="GeneID" id="11770535"/>
<dbReference type="KEGG" id="sbn:Sbal195_0181"/>
<dbReference type="HOGENOM" id="CLU_052344_2_0_6"/>
<dbReference type="UniPathway" id="UPA00219"/>
<dbReference type="Proteomes" id="UP000000770">
    <property type="component" value="Chromosome"/>
</dbReference>
<dbReference type="GO" id="GO:0008881">
    <property type="term" value="F:glutamate racemase activity"/>
    <property type="evidence" value="ECO:0007669"/>
    <property type="project" value="UniProtKB-UniRule"/>
</dbReference>
<dbReference type="GO" id="GO:0071555">
    <property type="term" value="P:cell wall organization"/>
    <property type="evidence" value="ECO:0007669"/>
    <property type="project" value="UniProtKB-KW"/>
</dbReference>
<dbReference type="GO" id="GO:0009252">
    <property type="term" value="P:peptidoglycan biosynthetic process"/>
    <property type="evidence" value="ECO:0007669"/>
    <property type="project" value="UniProtKB-UniRule"/>
</dbReference>
<dbReference type="GO" id="GO:0008360">
    <property type="term" value="P:regulation of cell shape"/>
    <property type="evidence" value="ECO:0007669"/>
    <property type="project" value="UniProtKB-KW"/>
</dbReference>
<dbReference type="FunFam" id="3.40.50.1860:FF:000001">
    <property type="entry name" value="Glutamate racemase"/>
    <property type="match status" value="1"/>
</dbReference>
<dbReference type="Gene3D" id="3.40.50.1860">
    <property type="match status" value="2"/>
</dbReference>
<dbReference type="HAMAP" id="MF_00258">
    <property type="entry name" value="Glu_racemase"/>
    <property type="match status" value="1"/>
</dbReference>
<dbReference type="InterPro" id="IPR015942">
    <property type="entry name" value="Asp/Glu/hydantoin_racemase"/>
</dbReference>
<dbReference type="InterPro" id="IPR001920">
    <property type="entry name" value="Asp/Glu_race"/>
</dbReference>
<dbReference type="InterPro" id="IPR018187">
    <property type="entry name" value="Asp/Glu_racemase_AS_1"/>
</dbReference>
<dbReference type="InterPro" id="IPR033134">
    <property type="entry name" value="Asp/Glu_racemase_AS_2"/>
</dbReference>
<dbReference type="InterPro" id="IPR004391">
    <property type="entry name" value="Glu_race"/>
</dbReference>
<dbReference type="NCBIfam" id="TIGR00067">
    <property type="entry name" value="glut_race"/>
    <property type="match status" value="1"/>
</dbReference>
<dbReference type="PANTHER" id="PTHR21198">
    <property type="entry name" value="GLUTAMATE RACEMASE"/>
    <property type="match status" value="1"/>
</dbReference>
<dbReference type="PANTHER" id="PTHR21198:SF2">
    <property type="entry name" value="GLUTAMATE RACEMASE"/>
    <property type="match status" value="1"/>
</dbReference>
<dbReference type="Pfam" id="PF01177">
    <property type="entry name" value="Asp_Glu_race"/>
    <property type="match status" value="1"/>
</dbReference>
<dbReference type="SUPFAM" id="SSF53681">
    <property type="entry name" value="Aspartate/glutamate racemase"/>
    <property type="match status" value="2"/>
</dbReference>
<dbReference type="PROSITE" id="PS00923">
    <property type="entry name" value="ASP_GLU_RACEMASE_1"/>
    <property type="match status" value="1"/>
</dbReference>
<dbReference type="PROSITE" id="PS00924">
    <property type="entry name" value="ASP_GLU_RACEMASE_2"/>
    <property type="match status" value="1"/>
</dbReference>
<feature type="chain" id="PRO_1000078571" description="Glutamate racemase">
    <location>
        <begin position="1"/>
        <end position="274"/>
    </location>
</feature>
<feature type="active site" description="Proton donor/acceptor" evidence="1">
    <location>
        <position position="73"/>
    </location>
</feature>
<feature type="active site" description="Proton donor/acceptor" evidence="1">
    <location>
        <position position="183"/>
    </location>
</feature>
<feature type="binding site" evidence="1">
    <location>
        <begin position="9"/>
        <end position="10"/>
    </location>
    <ligand>
        <name>substrate</name>
    </ligand>
</feature>
<feature type="binding site" evidence="1">
    <location>
        <begin position="41"/>
        <end position="42"/>
    </location>
    <ligand>
        <name>substrate</name>
    </ligand>
</feature>
<feature type="binding site" evidence="1">
    <location>
        <begin position="74"/>
        <end position="75"/>
    </location>
    <ligand>
        <name>substrate</name>
    </ligand>
</feature>
<feature type="binding site" evidence="1">
    <location>
        <begin position="184"/>
        <end position="185"/>
    </location>
    <ligand>
        <name>substrate</name>
    </ligand>
</feature>
<evidence type="ECO:0000255" key="1">
    <source>
        <dbReference type="HAMAP-Rule" id="MF_00258"/>
    </source>
</evidence>
<keyword id="KW-0133">Cell shape</keyword>
<keyword id="KW-0961">Cell wall biogenesis/degradation</keyword>
<keyword id="KW-0413">Isomerase</keyword>
<keyword id="KW-0573">Peptidoglycan synthesis</keyword>
<sequence>MSRPILVFDSGIGGLSVLAEIRKSLPHSDYCYLFDNARLPYGELEEQVLIAGCVALVCDLVARTNAMIVVVACNTASTVVLPALRANLSIPVVGVVPAIKPAAQMSKSKRIGLLATPGTVKRHYTHELISQFADDCHVELFGCSELVMMAEQKIATGEMDMHRLADLLAPVVAAQLDVLVLGCTHFPMIQAELQQVLGAGVTLMDSGAAIAKRVVTLLTQQNLIVEQRRVTNEREALGQSVMQAFYTKAEISEGLTTTLIDCGFSTIERITTTN</sequence>
<organism>
    <name type="scientific">Shewanella baltica (strain OS195)</name>
    <dbReference type="NCBI Taxonomy" id="399599"/>
    <lineage>
        <taxon>Bacteria</taxon>
        <taxon>Pseudomonadati</taxon>
        <taxon>Pseudomonadota</taxon>
        <taxon>Gammaproteobacteria</taxon>
        <taxon>Alteromonadales</taxon>
        <taxon>Shewanellaceae</taxon>
        <taxon>Shewanella</taxon>
    </lineage>
</organism>
<protein>
    <recommendedName>
        <fullName evidence="1">Glutamate racemase</fullName>
        <ecNumber evidence="1">5.1.1.3</ecNumber>
    </recommendedName>
</protein>
<name>MURI_SHEB9</name>
<reference key="1">
    <citation type="submission" date="2007-11" db="EMBL/GenBank/DDBJ databases">
        <title>Complete sequence of chromosome of Shewanella baltica OS195.</title>
        <authorList>
            <consortium name="US DOE Joint Genome Institute"/>
            <person name="Copeland A."/>
            <person name="Lucas S."/>
            <person name="Lapidus A."/>
            <person name="Barry K."/>
            <person name="Glavina del Rio T."/>
            <person name="Dalin E."/>
            <person name="Tice H."/>
            <person name="Pitluck S."/>
            <person name="Chain P."/>
            <person name="Malfatti S."/>
            <person name="Shin M."/>
            <person name="Vergez L."/>
            <person name="Schmutz J."/>
            <person name="Larimer F."/>
            <person name="Land M."/>
            <person name="Hauser L."/>
            <person name="Kyrpides N."/>
            <person name="Kim E."/>
            <person name="Brettar I."/>
            <person name="Rodrigues J."/>
            <person name="Konstantinidis K."/>
            <person name="Klappenbach J."/>
            <person name="Hofle M."/>
            <person name="Tiedje J."/>
            <person name="Richardson P."/>
        </authorList>
    </citation>
    <scope>NUCLEOTIDE SEQUENCE [LARGE SCALE GENOMIC DNA]</scope>
    <source>
        <strain>OS195</strain>
    </source>
</reference>
<accession>A9KW83</accession>
<gene>
    <name evidence="1" type="primary">murI</name>
    <name type="ordered locus">Sbal195_0181</name>
</gene>
<comment type="function">
    <text evidence="1">Provides the (R)-glutamate required for cell wall biosynthesis.</text>
</comment>
<comment type="catalytic activity">
    <reaction evidence="1">
        <text>L-glutamate = D-glutamate</text>
        <dbReference type="Rhea" id="RHEA:12813"/>
        <dbReference type="ChEBI" id="CHEBI:29985"/>
        <dbReference type="ChEBI" id="CHEBI:29986"/>
        <dbReference type="EC" id="5.1.1.3"/>
    </reaction>
</comment>
<comment type="pathway">
    <text evidence="1">Cell wall biogenesis; peptidoglycan biosynthesis.</text>
</comment>
<comment type="similarity">
    <text evidence="1">Belongs to the aspartate/glutamate racemases family.</text>
</comment>
<proteinExistence type="inferred from homology"/>